<comment type="function">
    <text evidence="1">Protein S19 forms a complex with S13 that binds strongly to the 16S ribosomal RNA.</text>
</comment>
<comment type="similarity">
    <text evidence="1">Belongs to the universal ribosomal protein uS19 family.</text>
</comment>
<evidence type="ECO:0000255" key="1">
    <source>
        <dbReference type="HAMAP-Rule" id="MF_00531"/>
    </source>
</evidence>
<evidence type="ECO:0000305" key="2"/>
<reference key="1">
    <citation type="submission" date="2008-05" db="EMBL/GenBank/DDBJ databases">
        <title>Complete sequence of Shigella boydii serotype 18 strain BS512.</title>
        <authorList>
            <person name="Rasko D.A."/>
            <person name="Rosovitz M."/>
            <person name="Maurelli A.T."/>
            <person name="Myers G."/>
            <person name="Seshadri R."/>
            <person name="Cer R."/>
            <person name="Jiang L."/>
            <person name="Ravel J."/>
            <person name="Sebastian Y."/>
        </authorList>
    </citation>
    <scope>NUCLEOTIDE SEQUENCE [LARGE SCALE GENOMIC DNA]</scope>
    <source>
        <strain>CDC 3083-94 / BS512</strain>
    </source>
</reference>
<accession>B2U2T4</accession>
<keyword id="KW-1185">Reference proteome</keyword>
<keyword id="KW-0687">Ribonucleoprotein</keyword>
<keyword id="KW-0689">Ribosomal protein</keyword>
<keyword id="KW-0694">RNA-binding</keyword>
<keyword id="KW-0699">rRNA-binding</keyword>
<protein>
    <recommendedName>
        <fullName evidence="1">Small ribosomal subunit protein uS19</fullName>
    </recommendedName>
    <alternativeName>
        <fullName evidence="2">30S ribosomal protein S19</fullName>
    </alternativeName>
</protein>
<proteinExistence type="inferred from homology"/>
<feature type="chain" id="PRO_1000128038" description="Small ribosomal subunit protein uS19">
    <location>
        <begin position="1"/>
        <end position="92"/>
    </location>
</feature>
<organism>
    <name type="scientific">Shigella boydii serotype 18 (strain CDC 3083-94 / BS512)</name>
    <dbReference type="NCBI Taxonomy" id="344609"/>
    <lineage>
        <taxon>Bacteria</taxon>
        <taxon>Pseudomonadati</taxon>
        <taxon>Pseudomonadota</taxon>
        <taxon>Gammaproteobacteria</taxon>
        <taxon>Enterobacterales</taxon>
        <taxon>Enterobacteriaceae</taxon>
        <taxon>Shigella</taxon>
    </lineage>
</organism>
<sequence length="92" mass="10430">MPRSLKKGPFIDLHLLKKVEKAVESGDKKPLRTWSRRSTIFPNMIGLTIAVHNGRQHVPVFVTDEMVGHKLGEFAPTRTYRGHAADKKAKKK</sequence>
<name>RS19_SHIB3</name>
<dbReference type="EMBL" id="CP001063">
    <property type="protein sequence ID" value="ACD10193.1"/>
    <property type="molecule type" value="Genomic_DNA"/>
</dbReference>
<dbReference type="RefSeq" id="WP_001138117.1">
    <property type="nucleotide sequence ID" value="NC_010658.1"/>
</dbReference>
<dbReference type="SMR" id="B2U2T4"/>
<dbReference type="STRING" id="344609.SbBS512_E3701"/>
<dbReference type="GeneID" id="98390438"/>
<dbReference type="KEGG" id="sbc:SbBS512_E3701"/>
<dbReference type="HOGENOM" id="CLU_144911_0_1_6"/>
<dbReference type="Proteomes" id="UP000001030">
    <property type="component" value="Chromosome"/>
</dbReference>
<dbReference type="GO" id="GO:0005737">
    <property type="term" value="C:cytoplasm"/>
    <property type="evidence" value="ECO:0007669"/>
    <property type="project" value="UniProtKB-ARBA"/>
</dbReference>
<dbReference type="GO" id="GO:0015935">
    <property type="term" value="C:small ribosomal subunit"/>
    <property type="evidence" value="ECO:0007669"/>
    <property type="project" value="InterPro"/>
</dbReference>
<dbReference type="GO" id="GO:0019843">
    <property type="term" value="F:rRNA binding"/>
    <property type="evidence" value="ECO:0007669"/>
    <property type="project" value="UniProtKB-UniRule"/>
</dbReference>
<dbReference type="GO" id="GO:0003735">
    <property type="term" value="F:structural constituent of ribosome"/>
    <property type="evidence" value="ECO:0007669"/>
    <property type="project" value="InterPro"/>
</dbReference>
<dbReference type="GO" id="GO:0000028">
    <property type="term" value="P:ribosomal small subunit assembly"/>
    <property type="evidence" value="ECO:0007669"/>
    <property type="project" value="TreeGrafter"/>
</dbReference>
<dbReference type="GO" id="GO:0006412">
    <property type="term" value="P:translation"/>
    <property type="evidence" value="ECO:0007669"/>
    <property type="project" value="UniProtKB-UniRule"/>
</dbReference>
<dbReference type="FunFam" id="3.30.860.10:FF:000001">
    <property type="entry name" value="30S ribosomal protein S19"/>
    <property type="match status" value="1"/>
</dbReference>
<dbReference type="Gene3D" id="3.30.860.10">
    <property type="entry name" value="30s Ribosomal Protein S19, Chain A"/>
    <property type="match status" value="1"/>
</dbReference>
<dbReference type="HAMAP" id="MF_00531">
    <property type="entry name" value="Ribosomal_uS19"/>
    <property type="match status" value="1"/>
</dbReference>
<dbReference type="InterPro" id="IPR002222">
    <property type="entry name" value="Ribosomal_uS19"/>
</dbReference>
<dbReference type="InterPro" id="IPR005732">
    <property type="entry name" value="Ribosomal_uS19_bac-type"/>
</dbReference>
<dbReference type="InterPro" id="IPR020934">
    <property type="entry name" value="Ribosomal_uS19_CS"/>
</dbReference>
<dbReference type="InterPro" id="IPR023575">
    <property type="entry name" value="Ribosomal_uS19_SF"/>
</dbReference>
<dbReference type="NCBIfam" id="TIGR01050">
    <property type="entry name" value="rpsS_bact"/>
    <property type="match status" value="1"/>
</dbReference>
<dbReference type="PANTHER" id="PTHR11880">
    <property type="entry name" value="RIBOSOMAL PROTEIN S19P FAMILY MEMBER"/>
    <property type="match status" value="1"/>
</dbReference>
<dbReference type="PANTHER" id="PTHR11880:SF8">
    <property type="entry name" value="SMALL RIBOSOMAL SUBUNIT PROTEIN US19M"/>
    <property type="match status" value="1"/>
</dbReference>
<dbReference type="Pfam" id="PF00203">
    <property type="entry name" value="Ribosomal_S19"/>
    <property type="match status" value="1"/>
</dbReference>
<dbReference type="PIRSF" id="PIRSF002144">
    <property type="entry name" value="Ribosomal_S19"/>
    <property type="match status" value="1"/>
</dbReference>
<dbReference type="PRINTS" id="PR00975">
    <property type="entry name" value="RIBOSOMALS19"/>
</dbReference>
<dbReference type="SUPFAM" id="SSF54570">
    <property type="entry name" value="Ribosomal protein S19"/>
    <property type="match status" value="1"/>
</dbReference>
<dbReference type="PROSITE" id="PS00323">
    <property type="entry name" value="RIBOSOMAL_S19"/>
    <property type="match status" value="1"/>
</dbReference>
<gene>
    <name evidence="1" type="primary">rpsS</name>
    <name type="ordered locus">SbBS512_E3701</name>
</gene>